<comment type="subcellular location">
    <subcellularLocation>
        <location evidence="1">Cell inner membrane</location>
        <topology evidence="1">Multi-pass membrane protein</topology>
    </subcellularLocation>
</comment>
<comment type="similarity">
    <text evidence="1">Belongs to the UPF0299 family.</text>
</comment>
<keyword id="KW-0997">Cell inner membrane</keyword>
<keyword id="KW-1003">Cell membrane</keyword>
<keyword id="KW-0472">Membrane</keyword>
<keyword id="KW-1185">Reference proteome</keyword>
<keyword id="KW-0812">Transmembrane</keyword>
<keyword id="KW-1133">Transmembrane helix</keyword>
<evidence type="ECO:0000255" key="1">
    <source>
        <dbReference type="HAMAP-Rule" id="MF_01144"/>
    </source>
</evidence>
<accession>B7MF53</accession>
<gene>
    <name evidence="1" type="primary">yohJ</name>
    <name type="ordered locus">ECS88_2287</name>
</gene>
<proteinExistence type="inferred from homology"/>
<reference key="1">
    <citation type="journal article" date="2009" name="PLoS Genet.">
        <title>Organised genome dynamics in the Escherichia coli species results in highly diverse adaptive paths.</title>
        <authorList>
            <person name="Touchon M."/>
            <person name="Hoede C."/>
            <person name="Tenaillon O."/>
            <person name="Barbe V."/>
            <person name="Baeriswyl S."/>
            <person name="Bidet P."/>
            <person name="Bingen E."/>
            <person name="Bonacorsi S."/>
            <person name="Bouchier C."/>
            <person name="Bouvet O."/>
            <person name="Calteau A."/>
            <person name="Chiapello H."/>
            <person name="Clermont O."/>
            <person name="Cruveiller S."/>
            <person name="Danchin A."/>
            <person name="Diard M."/>
            <person name="Dossat C."/>
            <person name="Karoui M.E."/>
            <person name="Frapy E."/>
            <person name="Garry L."/>
            <person name="Ghigo J.M."/>
            <person name="Gilles A.M."/>
            <person name="Johnson J."/>
            <person name="Le Bouguenec C."/>
            <person name="Lescat M."/>
            <person name="Mangenot S."/>
            <person name="Martinez-Jehanne V."/>
            <person name="Matic I."/>
            <person name="Nassif X."/>
            <person name="Oztas S."/>
            <person name="Petit M.A."/>
            <person name="Pichon C."/>
            <person name="Rouy Z."/>
            <person name="Ruf C.S."/>
            <person name="Schneider D."/>
            <person name="Tourret J."/>
            <person name="Vacherie B."/>
            <person name="Vallenet D."/>
            <person name="Medigue C."/>
            <person name="Rocha E.P.C."/>
            <person name="Denamur E."/>
        </authorList>
    </citation>
    <scope>NUCLEOTIDE SEQUENCE [LARGE SCALE GENOMIC DNA]</scope>
    <source>
        <strain>S88 / ExPEC</strain>
    </source>
</reference>
<sequence length="132" mass="14579">MSKTLNIIWQYLRAFVLIYACLYAGIFIASLLPVTIPGSIIGMLILFVLLALQILPAKWVNPGCYVLIRYMALLFVPIGVGVMQYFDLLRAQFGPVVVSCAVSTLVVFLVVSWSSQLVHGERKVVGQKGSEE</sequence>
<protein>
    <recommendedName>
        <fullName evidence="1">UPF0299 membrane protein YohJ</fullName>
    </recommendedName>
</protein>
<feature type="chain" id="PRO_1000137355" description="UPF0299 membrane protein YohJ">
    <location>
        <begin position="1"/>
        <end position="132"/>
    </location>
</feature>
<feature type="transmembrane region" description="Helical" evidence="1">
    <location>
        <begin position="7"/>
        <end position="27"/>
    </location>
</feature>
<feature type="transmembrane region" description="Helical" evidence="1">
    <location>
        <begin position="31"/>
        <end position="51"/>
    </location>
</feature>
<feature type="transmembrane region" description="Helical" evidence="1">
    <location>
        <begin position="63"/>
        <end position="83"/>
    </location>
</feature>
<feature type="transmembrane region" description="Helical" evidence="1">
    <location>
        <begin position="93"/>
        <end position="113"/>
    </location>
</feature>
<name>YOHJ_ECO45</name>
<dbReference type="EMBL" id="CU928161">
    <property type="protein sequence ID" value="CAR03569.1"/>
    <property type="molecule type" value="Genomic_DNA"/>
</dbReference>
<dbReference type="RefSeq" id="WP_001295452.1">
    <property type="nucleotide sequence ID" value="NC_011742.1"/>
</dbReference>
<dbReference type="SMR" id="B7MF53"/>
<dbReference type="KEGG" id="ecz:ECS88_2287"/>
<dbReference type="HOGENOM" id="CLU_113736_1_1_6"/>
<dbReference type="Proteomes" id="UP000000747">
    <property type="component" value="Chromosome"/>
</dbReference>
<dbReference type="GO" id="GO:0005886">
    <property type="term" value="C:plasma membrane"/>
    <property type="evidence" value="ECO:0007669"/>
    <property type="project" value="UniProtKB-SubCell"/>
</dbReference>
<dbReference type="HAMAP" id="MF_01144">
    <property type="entry name" value="UPF0299"/>
    <property type="match status" value="1"/>
</dbReference>
<dbReference type="InterPro" id="IPR005538">
    <property type="entry name" value="LrgA/CidA"/>
</dbReference>
<dbReference type="InterPro" id="IPR022957">
    <property type="entry name" value="Uncharacterised_UPF0299"/>
</dbReference>
<dbReference type="NCBIfam" id="NF002494">
    <property type="entry name" value="PRK01821.1"/>
    <property type="match status" value="1"/>
</dbReference>
<dbReference type="PANTHER" id="PTHR33931">
    <property type="entry name" value="HOLIN-LIKE PROTEIN CIDA-RELATED"/>
    <property type="match status" value="1"/>
</dbReference>
<dbReference type="PANTHER" id="PTHR33931:SF5">
    <property type="entry name" value="UPF0299 MEMBRANE PROTEIN YOHJ"/>
    <property type="match status" value="1"/>
</dbReference>
<dbReference type="Pfam" id="PF03788">
    <property type="entry name" value="LrgA"/>
    <property type="match status" value="1"/>
</dbReference>
<organism>
    <name type="scientific">Escherichia coli O45:K1 (strain S88 / ExPEC)</name>
    <dbReference type="NCBI Taxonomy" id="585035"/>
    <lineage>
        <taxon>Bacteria</taxon>
        <taxon>Pseudomonadati</taxon>
        <taxon>Pseudomonadota</taxon>
        <taxon>Gammaproteobacteria</taxon>
        <taxon>Enterobacterales</taxon>
        <taxon>Enterobacteriaceae</taxon>
        <taxon>Escherichia</taxon>
    </lineage>
</organism>